<proteinExistence type="inferred from homology"/>
<dbReference type="EC" id="2.6.1.9" evidence="1"/>
<dbReference type="EMBL" id="CP000117">
    <property type="protein sequence ID" value="ABA23932.1"/>
    <property type="molecule type" value="Genomic_DNA"/>
</dbReference>
<dbReference type="SMR" id="Q3M504"/>
<dbReference type="STRING" id="240292.Ava_4334"/>
<dbReference type="KEGG" id="ava:Ava_4334"/>
<dbReference type="eggNOG" id="COG0079">
    <property type="taxonomic scope" value="Bacteria"/>
</dbReference>
<dbReference type="HOGENOM" id="CLU_017584_3_0_3"/>
<dbReference type="UniPathway" id="UPA00031">
    <property type="reaction ID" value="UER00012"/>
</dbReference>
<dbReference type="Proteomes" id="UP000002533">
    <property type="component" value="Chromosome"/>
</dbReference>
<dbReference type="GO" id="GO:0004400">
    <property type="term" value="F:histidinol-phosphate transaminase activity"/>
    <property type="evidence" value="ECO:0007669"/>
    <property type="project" value="UniProtKB-UniRule"/>
</dbReference>
<dbReference type="GO" id="GO:0030170">
    <property type="term" value="F:pyridoxal phosphate binding"/>
    <property type="evidence" value="ECO:0007669"/>
    <property type="project" value="InterPro"/>
</dbReference>
<dbReference type="GO" id="GO:0000105">
    <property type="term" value="P:L-histidine biosynthetic process"/>
    <property type="evidence" value="ECO:0007669"/>
    <property type="project" value="UniProtKB-UniRule"/>
</dbReference>
<dbReference type="CDD" id="cd00609">
    <property type="entry name" value="AAT_like"/>
    <property type="match status" value="1"/>
</dbReference>
<dbReference type="Gene3D" id="3.90.1150.10">
    <property type="entry name" value="Aspartate Aminotransferase, domain 1"/>
    <property type="match status" value="1"/>
</dbReference>
<dbReference type="Gene3D" id="3.40.640.10">
    <property type="entry name" value="Type I PLP-dependent aspartate aminotransferase-like (Major domain)"/>
    <property type="match status" value="1"/>
</dbReference>
<dbReference type="HAMAP" id="MF_01023">
    <property type="entry name" value="HisC_aminotrans_2"/>
    <property type="match status" value="1"/>
</dbReference>
<dbReference type="InterPro" id="IPR001917">
    <property type="entry name" value="Aminotrans_II_pyridoxalP_BS"/>
</dbReference>
<dbReference type="InterPro" id="IPR004839">
    <property type="entry name" value="Aminotransferase_I/II_large"/>
</dbReference>
<dbReference type="InterPro" id="IPR005861">
    <property type="entry name" value="HisP_aminotrans"/>
</dbReference>
<dbReference type="InterPro" id="IPR050106">
    <property type="entry name" value="HistidinolP_aminotransfase"/>
</dbReference>
<dbReference type="InterPro" id="IPR015424">
    <property type="entry name" value="PyrdxlP-dep_Trfase"/>
</dbReference>
<dbReference type="InterPro" id="IPR015421">
    <property type="entry name" value="PyrdxlP-dep_Trfase_major"/>
</dbReference>
<dbReference type="InterPro" id="IPR015422">
    <property type="entry name" value="PyrdxlP-dep_Trfase_small"/>
</dbReference>
<dbReference type="NCBIfam" id="TIGR01141">
    <property type="entry name" value="hisC"/>
    <property type="match status" value="1"/>
</dbReference>
<dbReference type="PANTHER" id="PTHR43643:SF3">
    <property type="entry name" value="HISTIDINOL-PHOSPHATE AMINOTRANSFERASE"/>
    <property type="match status" value="1"/>
</dbReference>
<dbReference type="PANTHER" id="PTHR43643">
    <property type="entry name" value="HISTIDINOL-PHOSPHATE AMINOTRANSFERASE 2"/>
    <property type="match status" value="1"/>
</dbReference>
<dbReference type="Pfam" id="PF00155">
    <property type="entry name" value="Aminotran_1_2"/>
    <property type="match status" value="1"/>
</dbReference>
<dbReference type="SUPFAM" id="SSF53383">
    <property type="entry name" value="PLP-dependent transferases"/>
    <property type="match status" value="1"/>
</dbReference>
<dbReference type="PROSITE" id="PS00599">
    <property type="entry name" value="AA_TRANSFER_CLASS_2"/>
    <property type="match status" value="1"/>
</dbReference>
<feature type="chain" id="PRO_0000230203" description="Histidinol-phosphate aminotransferase 1">
    <location>
        <begin position="1"/>
        <end position="350"/>
    </location>
</feature>
<feature type="modified residue" description="N6-(pyridoxal phosphate)lysine" evidence="1">
    <location>
        <position position="211"/>
    </location>
</feature>
<sequence>MTNYFRSNVEAMASYVPGEQPPRGTQVIKLNSNENPYPPSPAALAALQDIDGEWLRRYPEPLGGEFREAASKVLGVPSDWLIVGNGSDEILSIVIRACTEPGRKVVYPMPTYVLYRTLTQMQAADILEIPYQENNVLPVAELIAADGAVTFIASPNSPSGHIVPNDDLRKLASELSGVLVIDEAYVDFAEESALDLVQEYENVILIRTLSKGYSLAGLRLGFGVGNPKLLDGLFKVKDSYNIDAIACKVAAVAITDQAYKNSCVAKVKASRTQLTKDLKQLGFHVWDSHGNFLLTKPPEGNAEYLYEKLKEQKILIRYFQQPGLEDKLRITVGTDEQNHILVRALRDLLR</sequence>
<protein>
    <recommendedName>
        <fullName evidence="1">Histidinol-phosphate aminotransferase 1</fullName>
        <ecNumber evidence="1">2.6.1.9</ecNumber>
    </recommendedName>
    <alternativeName>
        <fullName evidence="1">Imidazole acetol-phosphate transaminase 1</fullName>
    </alternativeName>
</protein>
<organism>
    <name type="scientific">Trichormus variabilis (strain ATCC 29413 / PCC 7937)</name>
    <name type="common">Anabaena variabilis</name>
    <dbReference type="NCBI Taxonomy" id="240292"/>
    <lineage>
        <taxon>Bacteria</taxon>
        <taxon>Bacillati</taxon>
        <taxon>Cyanobacteriota</taxon>
        <taxon>Cyanophyceae</taxon>
        <taxon>Nostocales</taxon>
        <taxon>Nostocaceae</taxon>
        <taxon>Trichormus</taxon>
    </lineage>
</organism>
<evidence type="ECO:0000255" key="1">
    <source>
        <dbReference type="HAMAP-Rule" id="MF_01023"/>
    </source>
</evidence>
<comment type="catalytic activity">
    <reaction evidence="1">
        <text>L-histidinol phosphate + 2-oxoglutarate = 3-(imidazol-4-yl)-2-oxopropyl phosphate + L-glutamate</text>
        <dbReference type="Rhea" id="RHEA:23744"/>
        <dbReference type="ChEBI" id="CHEBI:16810"/>
        <dbReference type="ChEBI" id="CHEBI:29985"/>
        <dbReference type="ChEBI" id="CHEBI:57766"/>
        <dbReference type="ChEBI" id="CHEBI:57980"/>
        <dbReference type="EC" id="2.6.1.9"/>
    </reaction>
</comment>
<comment type="cofactor">
    <cofactor evidence="1">
        <name>pyridoxal 5'-phosphate</name>
        <dbReference type="ChEBI" id="CHEBI:597326"/>
    </cofactor>
</comment>
<comment type="pathway">
    <text evidence="1">Amino-acid biosynthesis; L-histidine biosynthesis; L-histidine from 5-phospho-alpha-D-ribose 1-diphosphate: step 7/9.</text>
</comment>
<comment type="subunit">
    <text evidence="1">Homodimer.</text>
</comment>
<comment type="similarity">
    <text evidence="1">Belongs to the class-II pyridoxal-phosphate-dependent aminotransferase family. Histidinol-phosphate aminotransferase subfamily.</text>
</comment>
<reference key="1">
    <citation type="journal article" date="2014" name="Stand. Genomic Sci.">
        <title>Complete genome sequence of Anabaena variabilis ATCC 29413.</title>
        <authorList>
            <person name="Thiel T."/>
            <person name="Pratte B.S."/>
            <person name="Zhong J."/>
            <person name="Goodwin L."/>
            <person name="Copeland A."/>
            <person name="Lucas S."/>
            <person name="Han C."/>
            <person name="Pitluck S."/>
            <person name="Land M.L."/>
            <person name="Kyrpides N.C."/>
            <person name="Woyke T."/>
        </authorList>
    </citation>
    <scope>NUCLEOTIDE SEQUENCE [LARGE SCALE GENOMIC DNA]</scope>
    <source>
        <strain>ATCC 29413 / PCC 7937</strain>
    </source>
</reference>
<keyword id="KW-0028">Amino-acid biosynthesis</keyword>
<keyword id="KW-0032">Aminotransferase</keyword>
<keyword id="KW-0368">Histidine biosynthesis</keyword>
<keyword id="KW-0663">Pyridoxal phosphate</keyword>
<keyword id="KW-0808">Transferase</keyword>
<gene>
    <name evidence="1" type="primary">hisC1</name>
    <name type="ordered locus">Ava_4334</name>
</gene>
<accession>Q3M504</accession>
<name>HIS81_TRIV2</name>